<name>RL36A_RAT</name>
<organism>
    <name type="scientific">Rattus norvegicus</name>
    <name type="common">Rat</name>
    <dbReference type="NCBI Taxonomy" id="10116"/>
    <lineage>
        <taxon>Eukaryota</taxon>
        <taxon>Metazoa</taxon>
        <taxon>Chordata</taxon>
        <taxon>Craniata</taxon>
        <taxon>Vertebrata</taxon>
        <taxon>Euteleostomi</taxon>
        <taxon>Mammalia</taxon>
        <taxon>Eutheria</taxon>
        <taxon>Euarchontoglires</taxon>
        <taxon>Glires</taxon>
        <taxon>Rodentia</taxon>
        <taxon>Myomorpha</taxon>
        <taxon>Muroidea</taxon>
        <taxon>Muridae</taxon>
        <taxon>Murinae</taxon>
        <taxon>Rattus</taxon>
    </lineage>
</organism>
<dbReference type="EMBL" id="M19635">
    <property type="protein sequence ID" value="AAB54277.1"/>
    <property type="molecule type" value="mRNA"/>
</dbReference>
<dbReference type="EMBL" id="BC058142">
    <property type="protein sequence ID" value="AAH58142.1"/>
    <property type="molecule type" value="mRNA"/>
</dbReference>
<dbReference type="PIR" id="A29820">
    <property type="entry name" value="R6RT36"/>
</dbReference>
<dbReference type="RefSeq" id="NP_001121537.1">
    <property type="nucleotide sequence ID" value="NM_001128065.1"/>
</dbReference>
<dbReference type="RefSeq" id="XP_017456534.1">
    <property type="nucleotide sequence ID" value="XM_017601045.1"/>
</dbReference>
<dbReference type="RefSeq" id="XP_017458726.1">
    <property type="nucleotide sequence ID" value="XM_017603237.1"/>
</dbReference>
<dbReference type="RefSeq" id="XP_017458727.1">
    <property type="nucleotide sequence ID" value="XM_017603238.1"/>
</dbReference>
<dbReference type="SMR" id="P83883"/>
<dbReference type="FunCoup" id="P83883">
    <property type="interactions" value="2401"/>
</dbReference>
<dbReference type="STRING" id="10116.ENSRNOP00000048003"/>
<dbReference type="iPTMnet" id="P83883"/>
<dbReference type="PhosphoSitePlus" id="P83883"/>
<dbReference type="PaxDb" id="10116-ENSRNOP00000048003"/>
<dbReference type="Ensembl" id="ENSRNOT00000043171.3">
    <property type="protein sequence ID" value="ENSRNOP00000048003.2"/>
    <property type="gene ID" value="ENSRNOG00000031315.3"/>
</dbReference>
<dbReference type="Ensembl" id="ENSRNOT00000057222.3">
    <property type="protein sequence ID" value="ENSRNOP00000054048.2"/>
    <property type="gene ID" value="ENSRNOG00000011494.5"/>
</dbReference>
<dbReference type="GeneID" id="292964"/>
<dbReference type="KEGG" id="rno:292964"/>
<dbReference type="KEGG" id="rno:81769"/>
<dbReference type="UCSC" id="RGD:621156">
    <property type="organism name" value="rat"/>
</dbReference>
<dbReference type="AGR" id="RGD:1306640"/>
<dbReference type="AGR" id="RGD:621156"/>
<dbReference type="CTD" id="6173"/>
<dbReference type="CTD" id="81769"/>
<dbReference type="RGD" id="621156">
    <property type="gene designation" value="Rpl36a"/>
</dbReference>
<dbReference type="eggNOG" id="KOG3464">
    <property type="taxonomic scope" value="Eukaryota"/>
</dbReference>
<dbReference type="GeneTree" id="ENSGT00390000018085"/>
<dbReference type="HOGENOM" id="CLU_114645_2_1_1"/>
<dbReference type="InParanoid" id="P83883"/>
<dbReference type="OMA" id="CKKHTIH"/>
<dbReference type="OrthoDB" id="2967263at2759"/>
<dbReference type="PhylomeDB" id="P83883"/>
<dbReference type="TreeFam" id="TF300213"/>
<dbReference type="Reactome" id="R-RNO-156827">
    <property type="pathway name" value="L13a-mediated translational silencing of Ceruloplasmin expression"/>
</dbReference>
<dbReference type="Reactome" id="R-RNO-1799339">
    <property type="pathway name" value="SRP-dependent cotranslational protein targeting to membrane"/>
</dbReference>
<dbReference type="Reactome" id="R-RNO-6791226">
    <property type="pathway name" value="Major pathway of rRNA processing in the nucleolus and cytosol"/>
</dbReference>
<dbReference type="Reactome" id="R-RNO-72689">
    <property type="pathway name" value="Formation of a pool of free 40S subunits"/>
</dbReference>
<dbReference type="Reactome" id="R-RNO-72706">
    <property type="pathway name" value="GTP hydrolysis and joining of the 60S ribosomal subunit"/>
</dbReference>
<dbReference type="Reactome" id="R-RNO-975956">
    <property type="pathway name" value="Nonsense Mediated Decay (NMD) independent of the Exon Junction Complex (EJC)"/>
</dbReference>
<dbReference type="Reactome" id="R-RNO-975957">
    <property type="pathway name" value="Nonsense Mediated Decay (NMD) enhanced by the Exon Junction Complex (EJC)"/>
</dbReference>
<dbReference type="PRO" id="PR:P83883"/>
<dbReference type="Proteomes" id="UP000002494">
    <property type="component" value="Chromosome 10"/>
</dbReference>
<dbReference type="Proteomes" id="UP000002494">
    <property type="component" value="Chromosome X"/>
</dbReference>
<dbReference type="Bgee" id="ENSRNOG00000011494">
    <property type="expression patterns" value="Expressed in pancreas and 19 other cell types or tissues"/>
</dbReference>
<dbReference type="ExpressionAtlas" id="P83883">
    <property type="expression patterns" value="baseline and differential"/>
</dbReference>
<dbReference type="GO" id="GO:0022625">
    <property type="term" value="C:cytosolic large ribosomal subunit"/>
    <property type="evidence" value="ECO:0000318"/>
    <property type="project" value="GO_Central"/>
</dbReference>
<dbReference type="GO" id="GO:0005634">
    <property type="term" value="C:nucleus"/>
    <property type="evidence" value="ECO:0000266"/>
    <property type="project" value="RGD"/>
</dbReference>
<dbReference type="GO" id="GO:0003735">
    <property type="term" value="F:structural constituent of ribosome"/>
    <property type="evidence" value="ECO:0007669"/>
    <property type="project" value="InterPro"/>
</dbReference>
<dbReference type="GO" id="GO:0032526">
    <property type="term" value="P:response to retinoic acid"/>
    <property type="evidence" value="ECO:0000266"/>
    <property type="project" value="RGD"/>
</dbReference>
<dbReference type="GO" id="GO:0006412">
    <property type="term" value="P:translation"/>
    <property type="evidence" value="ECO:0007669"/>
    <property type="project" value="InterPro"/>
</dbReference>
<dbReference type="FunFam" id="3.10.450.80:FF:000001">
    <property type="entry name" value="60S ribosomal protein L44"/>
    <property type="match status" value="1"/>
</dbReference>
<dbReference type="Gene3D" id="3.10.450.80">
    <property type="match status" value="1"/>
</dbReference>
<dbReference type="InterPro" id="IPR000552">
    <property type="entry name" value="Ribosomal_eL44"/>
</dbReference>
<dbReference type="InterPro" id="IPR053708">
    <property type="entry name" value="Ribosomal_LSU_eL42"/>
</dbReference>
<dbReference type="InterPro" id="IPR011332">
    <property type="entry name" value="Ribosomal_zn-bd"/>
</dbReference>
<dbReference type="PANTHER" id="PTHR10369">
    <property type="entry name" value="60S RIBOSOMAL PROTEIN L36A/L44"/>
    <property type="match status" value="1"/>
</dbReference>
<dbReference type="Pfam" id="PF00935">
    <property type="entry name" value="Ribosomal_L44"/>
    <property type="match status" value="1"/>
</dbReference>
<dbReference type="SUPFAM" id="SSF57829">
    <property type="entry name" value="Zn-binding ribosomal proteins"/>
    <property type="match status" value="1"/>
</dbReference>
<dbReference type="PROSITE" id="PS01172">
    <property type="entry name" value="RIBOSOMAL_L44E"/>
    <property type="match status" value="1"/>
</dbReference>
<keyword id="KW-0963">Cytoplasm</keyword>
<keyword id="KW-0903">Direct protein sequencing</keyword>
<keyword id="KW-1185">Reference proteome</keyword>
<keyword id="KW-0687">Ribonucleoprotein</keyword>
<keyword id="KW-0689">Ribosomal protein</keyword>
<proteinExistence type="evidence at protein level"/>
<evidence type="ECO:0000250" key="1">
    <source>
        <dbReference type="UniProtKB" id="P83881"/>
    </source>
</evidence>
<evidence type="ECO:0000256" key="2">
    <source>
        <dbReference type="SAM" id="MobiDB-lite"/>
    </source>
</evidence>
<evidence type="ECO:0000305" key="3"/>
<comment type="function">
    <text evidence="1">Component of the large ribosomal subunit. The ribosome is a large ribonucleoprotein complex responsible for the synthesis of proteins in the cell.</text>
</comment>
<comment type="subunit">
    <text evidence="1">Component of the large ribosomal subunit.</text>
</comment>
<comment type="subcellular location">
    <subcellularLocation>
        <location evidence="1">Cytoplasm</location>
    </subcellularLocation>
</comment>
<comment type="similarity">
    <text evidence="3">Belongs to the eukaryotic ribosomal protein eL42 family.</text>
</comment>
<accession>P83883</accession>
<accession>P09896</accession>
<accession>P10661</accession>
<sequence length="106" mass="12441">MVNVPKTRRTFCKKCGKHQPHKVTQYKKGKDSLYAQGKRRYDRKQSGYGGQTKPIFRKKAKTTKKIVLRLECVEPNCRSKRMLAIKRCKHFELGGDKKRKGQVIQF</sequence>
<feature type="chain" id="PRO_0000149122" description="Large ribosomal subunit protein eL42">
    <location>
        <begin position="1"/>
        <end position="106"/>
    </location>
</feature>
<feature type="region of interest" description="Disordered" evidence="2">
    <location>
        <begin position="34"/>
        <end position="53"/>
    </location>
</feature>
<reference key="1">
    <citation type="journal article" date="1988" name="DNA">
        <title>Primary structure of rat ribosomal protein L36a.</title>
        <authorList>
            <person name="Gallagher M.J."/>
            <person name="Chan Y.-L."/>
            <person name="Lin A."/>
            <person name="Wool I.G."/>
        </authorList>
    </citation>
    <scope>NUCLEOTIDE SEQUENCE [MRNA]</scope>
    <scope>PARTIAL PROTEIN SEQUENCE</scope>
</reference>
<reference key="2">
    <citation type="journal article" date="2004" name="Genome Res.">
        <title>The status, quality, and expansion of the NIH full-length cDNA project: the Mammalian Gene Collection (MGC).</title>
        <authorList>
            <consortium name="The MGC Project Team"/>
        </authorList>
    </citation>
    <scope>NUCLEOTIDE SEQUENCE [LARGE SCALE MRNA]</scope>
    <source>
        <tissue>Pituitary</tissue>
    </source>
</reference>
<gene>
    <name type="primary">Rpl36a</name>
    <name type="synonym">Rpl44</name>
</gene>
<protein>
    <recommendedName>
        <fullName evidence="3">Large ribosomal subunit protein eL42</fullName>
    </recommendedName>
    <alternativeName>
        <fullName>60S ribosomal protein L36a</fullName>
    </alternativeName>
    <alternativeName>
        <fullName>60S ribosomal protein L44</fullName>
    </alternativeName>
</protein>